<sequence length="26" mass="3017">MSDIEQRIKQAVAEQLGMRAEEIKNE</sequence>
<organism>
    <name type="scientific">Acinetobacter calcoaceticus</name>
    <dbReference type="NCBI Taxonomy" id="471"/>
    <lineage>
        <taxon>Bacteria</taxon>
        <taxon>Pseudomonadati</taxon>
        <taxon>Pseudomonadota</taxon>
        <taxon>Gammaproteobacteria</taxon>
        <taxon>Moraxellales</taxon>
        <taxon>Moraxellaceae</taxon>
        <taxon>Acinetobacter</taxon>
        <taxon>Acinetobacter calcoaceticus/baumannii complex</taxon>
    </lineage>
</organism>
<gene>
    <name type="primary">acpP</name>
</gene>
<feature type="initiator methionine" description="Removed" evidence="3">
    <location>
        <position position="1"/>
    </location>
</feature>
<feature type="chain" id="PRO_0000180089" description="Acyl carrier protein">
    <location>
        <begin position="2"/>
        <end position="26" status="greater than"/>
    </location>
</feature>
<feature type="domain" description="Carrier" evidence="2">
    <location>
        <begin position="2"/>
        <end position="26" status="greater than"/>
    </location>
</feature>
<feature type="non-terminal residue">
    <location>
        <position position="26"/>
    </location>
</feature>
<evidence type="ECO:0000250" key="1"/>
<evidence type="ECO:0000255" key="2">
    <source>
        <dbReference type="PROSITE-ProRule" id="PRU00258"/>
    </source>
</evidence>
<evidence type="ECO:0000269" key="3">
    <source>
    </source>
</evidence>
<evidence type="ECO:0000305" key="4"/>
<name>ACP_ACICA</name>
<accession>P80916</accession>
<keyword id="KW-0963">Cytoplasm</keyword>
<keyword id="KW-0903">Direct protein sequencing</keyword>
<keyword id="KW-0275">Fatty acid biosynthesis</keyword>
<keyword id="KW-0276">Fatty acid metabolism</keyword>
<keyword id="KW-0444">Lipid biosynthesis</keyword>
<keyword id="KW-0443">Lipid metabolism</keyword>
<keyword id="KW-0596">Phosphopantetheine</keyword>
<protein>
    <recommendedName>
        <fullName>Acyl carrier protein</fullName>
        <shortName>ACP</shortName>
    </recommendedName>
</protein>
<comment type="function">
    <text>Carrier of the growing fatty acid chain in fatty acid biosynthesis.</text>
</comment>
<comment type="pathway">
    <text>Lipid metabolism; fatty acid biosynthesis.</text>
</comment>
<comment type="subcellular location">
    <subcellularLocation>
        <location evidence="1">Cytoplasm</location>
    </subcellularLocation>
</comment>
<comment type="PTM">
    <text>4'-phosphopantetheine is transferred from CoA to a specific serine of apo-ACP by AcpS. This modification is essential for activity because fatty acids are bound in thioester linkage to the sulfhydryl of the prosthetic group.</text>
</comment>
<comment type="similarity">
    <text evidence="4">Belongs to the acyl carrier protein (ACP) family.</text>
</comment>
<reference key="1">
    <citation type="journal article" date="1997" name="J. Bacteriol.">
        <title>Domains of Escherichia coli acyl carrier protein important for membrane-derived-oligosaccharide biosynthesis.</title>
        <authorList>
            <person name="Tang L."/>
            <person name="Weissborn A.C."/>
            <person name="Kennedy E.P."/>
        </authorList>
    </citation>
    <scope>PROTEIN SEQUENCE OF 2-26</scope>
    <source>
        <strain>ATCC 33604 / 468</strain>
    </source>
</reference>
<proteinExistence type="evidence at protein level"/>
<dbReference type="SMR" id="P80916"/>
<dbReference type="STRING" id="471.BUM88_03895"/>
<dbReference type="UniPathway" id="UPA00094"/>
<dbReference type="GO" id="GO:0005737">
    <property type="term" value="C:cytoplasm"/>
    <property type="evidence" value="ECO:0007669"/>
    <property type="project" value="UniProtKB-SubCell"/>
</dbReference>
<dbReference type="GO" id="GO:0006633">
    <property type="term" value="P:fatty acid biosynthetic process"/>
    <property type="evidence" value="ECO:0007669"/>
    <property type="project" value="UniProtKB-UniPathway"/>
</dbReference>
<dbReference type="InterPro" id="IPR009081">
    <property type="entry name" value="PP-bd_ACP"/>
</dbReference>
<dbReference type="PROSITE" id="PS50075">
    <property type="entry name" value="CARRIER"/>
    <property type="match status" value="1"/>
</dbReference>